<protein>
    <recommendedName>
        <fullName evidence="1">Cytochrome b6</fullName>
    </recommendedName>
</protein>
<sequence length="215" mass="24181">MSKVYDWFEERLEIQTIADDITSKYVPPHVNIFYCLGGITLTCFLVQVATGFAMTFYYRPTVTEAFASVQYIMTEANFGWLIRSVHRWSASMMVLMMILHVFRVYLTGGFKKPRELTWVTGVVLGVLTASFGVTGYSLPWDQIGYWAVKIVTGVPEAIPVIGSPLVELLRGSASVGQSTLTRFYSLHTFVLPLLTAVFMLMHFPMIRKQGISGPL</sequence>
<organism>
    <name type="scientific">Populus alba</name>
    <name type="common">White poplar</name>
    <dbReference type="NCBI Taxonomy" id="43335"/>
    <lineage>
        <taxon>Eukaryota</taxon>
        <taxon>Viridiplantae</taxon>
        <taxon>Streptophyta</taxon>
        <taxon>Embryophyta</taxon>
        <taxon>Tracheophyta</taxon>
        <taxon>Spermatophyta</taxon>
        <taxon>Magnoliopsida</taxon>
        <taxon>eudicotyledons</taxon>
        <taxon>Gunneridae</taxon>
        <taxon>Pentapetalae</taxon>
        <taxon>rosids</taxon>
        <taxon>fabids</taxon>
        <taxon>Malpighiales</taxon>
        <taxon>Salicaceae</taxon>
        <taxon>Saliceae</taxon>
        <taxon>Populus</taxon>
    </lineage>
</organism>
<reference key="1">
    <citation type="submission" date="2005-03" db="EMBL/GenBank/DDBJ databases">
        <title>Complete structure of the chloroplast genome of Populus alba.</title>
        <authorList>
            <person name="Okumura S."/>
            <person name="Yamashita A."/>
            <person name="Kanamoto H."/>
            <person name="Hattori M."/>
            <person name="Takase H."/>
            <person name="Tomizawa K."/>
        </authorList>
    </citation>
    <scope>NUCLEOTIDE SEQUENCE [LARGE SCALE GENOMIC DNA]</scope>
</reference>
<proteinExistence type="inferred from homology"/>
<feature type="chain" id="PRO_0000275331" description="Cytochrome b6">
    <location>
        <begin position="1"/>
        <end position="215"/>
    </location>
</feature>
<feature type="transmembrane region" description="Helical" evidence="1">
    <location>
        <begin position="32"/>
        <end position="52"/>
    </location>
</feature>
<feature type="transmembrane region" description="Helical" evidence="1">
    <location>
        <begin position="90"/>
        <end position="110"/>
    </location>
</feature>
<feature type="transmembrane region" description="Helical" evidence="1">
    <location>
        <begin position="116"/>
        <end position="136"/>
    </location>
</feature>
<feature type="transmembrane region" description="Helical" evidence="1">
    <location>
        <begin position="186"/>
        <end position="206"/>
    </location>
</feature>
<feature type="binding site" description="covalent" evidence="1">
    <location>
        <position position="35"/>
    </location>
    <ligand>
        <name>heme c</name>
        <dbReference type="ChEBI" id="CHEBI:61717"/>
    </ligand>
</feature>
<feature type="binding site" description="axial binding residue" evidence="1">
    <location>
        <position position="86"/>
    </location>
    <ligand>
        <name>heme b</name>
        <dbReference type="ChEBI" id="CHEBI:60344"/>
        <label>2</label>
    </ligand>
    <ligandPart>
        <name>Fe</name>
        <dbReference type="ChEBI" id="CHEBI:18248"/>
    </ligandPart>
</feature>
<feature type="binding site" description="axial binding residue" evidence="1">
    <location>
        <position position="100"/>
    </location>
    <ligand>
        <name>heme b</name>
        <dbReference type="ChEBI" id="CHEBI:60344"/>
        <label>1</label>
    </ligand>
    <ligandPart>
        <name>Fe</name>
        <dbReference type="ChEBI" id="CHEBI:18248"/>
    </ligandPart>
</feature>
<feature type="binding site" description="axial binding residue" evidence="1">
    <location>
        <position position="187"/>
    </location>
    <ligand>
        <name>heme b</name>
        <dbReference type="ChEBI" id="CHEBI:60344"/>
        <label>2</label>
    </ligand>
    <ligandPart>
        <name>Fe</name>
        <dbReference type="ChEBI" id="CHEBI:18248"/>
    </ligandPart>
</feature>
<feature type="binding site" description="axial binding residue" evidence="1">
    <location>
        <position position="202"/>
    </location>
    <ligand>
        <name>heme b</name>
        <dbReference type="ChEBI" id="CHEBI:60344"/>
        <label>1</label>
    </ligand>
    <ligandPart>
        <name>Fe</name>
        <dbReference type="ChEBI" id="CHEBI:18248"/>
    </ligandPart>
</feature>
<geneLocation type="chloroplast"/>
<keyword id="KW-0150">Chloroplast</keyword>
<keyword id="KW-0249">Electron transport</keyword>
<keyword id="KW-0349">Heme</keyword>
<keyword id="KW-0408">Iron</keyword>
<keyword id="KW-0472">Membrane</keyword>
<keyword id="KW-0479">Metal-binding</keyword>
<keyword id="KW-0602">Photosynthesis</keyword>
<keyword id="KW-0934">Plastid</keyword>
<keyword id="KW-0793">Thylakoid</keyword>
<keyword id="KW-0812">Transmembrane</keyword>
<keyword id="KW-1133">Transmembrane helix</keyword>
<keyword id="KW-0813">Transport</keyword>
<dbReference type="EMBL" id="AP008956">
    <property type="protein sequence ID" value="BAE97235.1"/>
    <property type="molecule type" value="Genomic_DNA"/>
</dbReference>
<dbReference type="RefSeq" id="YP_665588.1">
    <property type="nucleotide sequence ID" value="NC_008235.1"/>
</dbReference>
<dbReference type="SMR" id="Q14FC7"/>
<dbReference type="GeneID" id="4178239"/>
<dbReference type="KEGG" id="palz:4178239"/>
<dbReference type="OrthoDB" id="1394at3646"/>
<dbReference type="GO" id="GO:0009535">
    <property type="term" value="C:chloroplast thylakoid membrane"/>
    <property type="evidence" value="ECO:0007669"/>
    <property type="project" value="UniProtKB-SubCell"/>
</dbReference>
<dbReference type="GO" id="GO:0045158">
    <property type="term" value="F:electron transporter, transferring electrons within cytochrome b6/f complex of photosystem II activity"/>
    <property type="evidence" value="ECO:0007669"/>
    <property type="project" value="UniProtKB-UniRule"/>
</dbReference>
<dbReference type="GO" id="GO:0046872">
    <property type="term" value="F:metal ion binding"/>
    <property type="evidence" value="ECO:0007669"/>
    <property type="project" value="UniProtKB-KW"/>
</dbReference>
<dbReference type="GO" id="GO:0016491">
    <property type="term" value="F:oxidoreductase activity"/>
    <property type="evidence" value="ECO:0007669"/>
    <property type="project" value="InterPro"/>
</dbReference>
<dbReference type="GO" id="GO:0015979">
    <property type="term" value="P:photosynthesis"/>
    <property type="evidence" value="ECO:0007669"/>
    <property type="project" value="UniProtKB-UniRule"/>
</dbReference>
<dbReference type="GO" id="GO:0022904">
    <property type="term" value="P:respiratory electron transport chain"/>
    <property type="evidence" value="ECO:0007669"/>
    <property type="project" value="InterPro"/>
</dbReference>
<dbReference type="CDD" id="cd00284">
    <property type="entry name" value="Cytochrome_b_N"/>
    <property type="match status" value="1"/>
</dbReference>
<dbReference type="FunFam" id="1.20.810.10:FF:000001">
    <property type="entry name" value="Cytochrome b6"/>
    <property type="match status" value="1"/>
</dbReference>
<dbReference type="Gene3D" id="1.20.810.10">
    <property type="entry name" value="Cytochrome Bc1 Complex, Chain C"/>
    <property type="match status" value="1"/>
</dbReference>
<dbReference type="HAMAP" id="MF_00633">
    <property type="entry name" value="Cytb6_f_cytb6"/>
    <property type="match status" value="1"/>
</dbReference>
<dbReference type="InterPro" id="IPR005797">
    <property type="entry name" value="Cyt_b/b6_N"/>
</dbReference>
<dbReference type="InterPro" id="IPR023530">
    <property type="entry name" value="Cyt_B6_PetB"/>
</dbReference>
<dbReference type="InterPro" id="IPR027387">
    <property type="entry name" value="Cytb/b6-like_sf"/>
</dbReference>
<dbReference type="InterPro" id="IPR048259">
    <property type="entry name" value="Cytochrome_b_N_euk/bac"/>
</dbReference>
<dbReference type="InterPro" id="IPR016174">
    <property type="entry name" value="Di-haem_cyt_TM"/>
</dbReference>
<dbReference type="NCBIfam" id="NF002990">
    <property type="entry name" value="PRK03735.1"/>
    <property type="match status" value="1"/>
</dbReference>
<dbReference type="PANTHER" id="PTHR19271">
    <property type="entry name" value="CYTOCHROME B"/>
    <property type="match status" value="1"/>
</dbReference>
<dbReference type="PANTHER" id="PTHR19271:SF16">
    <property type="entry name" value="CYTOCHROME B"/>
    <property type="match status" value="1"/>
</dbReference>
<dbReference type="Pfam" id="PF00033">
    <property type="entry name" value="Cytochrome_B"/>
    <property type="match status" value="1"/>
</dbReference>
<dbReference type="PIRSF" id="PIRSF000032">
    <property type="entry name" value="Cytochrome_b6"/>
    <property type="match status" value="1"/>
</dbReference>
<dbReference type="SUPFAM" id="SSF81342">
    <property type="entry name" value="Transmembrane di-heme cytochromes"/>
    <property type="match status" value="1"/>
</dbReference>
<dbReference type="PROSITE" id="PS51002">
    <property type="entry name" value="CYTB_NTER"/>
    <property type="match status" value="1"/>
</dbReference>
<evidence type="ECO:0000255" key="1">
    <source>
        <dbReference type="HAMAP-Rule" id="MF_00633"/>
    </source>
</evidence>
<accession>Q14FC7</accession>
<name>CYB6_POPAL</name>
<gene>
    <name evidence="1" type="primary">petB</name>
</gene>
<comment type="function">
    <text evidence="1">Component of the cytochrome b6-f complex, which mediates electron transfer between photosystem II (PSII) and photosystem I (PSI), cyclic electron flow around PSI, and state transitions.</text>
</comment>
<comment type="cofactor">
    <cofactor evidence="1">
        <name>heme b</name>
        <dbReference type="ChEBI" id="CHEBI:60344"/>
    </cofactor>
    <text evidence="1">Binds 2 heme b groups non-covalently with two histidine residues as axial ligands.</text>
</comment>
<comment type="cofactor">
    <cofactor evidence="1">
        <name>heme c</name>
        <dbReference type="ChEBI" id="CHEBI:61717"/>
    </cofactor>
    <text evidence="1">Binds one heme group covalently by a single cysteine link with no axial amino acid ligand. This heme was named heme ci.</text>
</comment>
<comment type="subunit">
    <text evidence="1">The 4 large subunits of the cytochrome b6-f complex are cytochrome b6, subunit IV (17 kDa polypeptide, PetD), cytochrome f and the Rieske protein, while the 4 small subunits are PetG, PetL, PetM and PetN. The complex functions as a dimer.</text>
</comment>
<comment type="subcellular location">
    <subcellularLocation>
        <location evidence="1">Plastid</location>
        <location evidence="1">Chloroplast thylakoid membrane</location>
        <topology evidence="1">Multi-pass membrane protein</topology>
    </subcellularLocation>
</comment>
<comment type="miscellaneous">
    <text evidence="1">Heme 1 (or BH or b566) is high-potential and absorbs at about 566 nm, and heme 2 (or BL or b562) is low-potential and absorbs at about 562 nm.</text>
</comment>
<comment type="similarity">
    <text evidence="1">Belongs to the cytochrome b family. PetB subfamily.</text>
</comment>